<keyword id="KW-0002">3D-structure</keyword>
<keyword id="KW-0007">Acetylation</keyword>
<keyword id="KW-0164">Citrullination</keyword>
<keyword id="KW-0963">Cytoplasm</keyword>
<keyword id="KW-0903">Direct protein sequencing</keyword>
<keyword id="KW-1017">Isopeptide bond</keyword>
<keyword id="KW-0488">Methylation</keyword>
<keyword id="KW-0597">Phosphoprotein</keyword>
<keyword id="KW-1267">Proteomics identification</keyword>
<keyword id="KW-1185">Reference proteome</keyword>
<keyword id="KW-0687">Ribonucleoprotein</keyword>
<keyword id="KW-0689">Ribosomal protein</keyword>
<keyword id="KW-0832">Ubl conjugation</keyword>
<proteinExistence type="evidence at protein level"/>
<feature type="initiator methionine" description="Removed" evidence="7 15">
    <location>
        <position position="1"/>
    </location>
</feature>
<feature type="chain" id="PRO_0000129350" description="Large ribosomal subunit protein uL4">
    <location>
        <begin position="2"/>
        <end position="427"/>
    </location>
</feature>
<feature type="region of interest" description="Disordered" evidence="3">
    <location>
        <begin position="369"/>
        <end position="427"/>
    </location>
</feature>
<feature type="compositionally biased region" description="Basic residues" evidence="3">
    <location>
        <begin position="377"/>
        <end position="397"/>
    </location>
</feature>
<feature type="compositionally biased region" description="Basic and acidic residues" evidence="3">
    <location>
        <begin position="407"/>
        <end position="427"/>
    </location>
</feature>
<feature type="modified residue" description="N-acetylalanine" evidence="7 15">
    <location>
        <position position="2"/>
    </location>
</feature>
<feature type="modified residue" description="N6-acetyllysine" evidence="16">
    <location>
        <position position="14"/>
    </location>
</feature>
<feature type="modified residue" description="Omega-N-methylarginine" evidence="2">
    <location>
        <position position="97"/>
    </location>
</feature>
<feature type="modified residue" description="N6-acetyllysine" evidence="16">
    <location>
        <position position="106"/>
    </location>
</feature>
<feature type="modified residue" description="N6-acetyllysine" evidence="2">
    <location>
        <position position="259"/>
    </location>
</feature>
<feature type="modified residue" description="Phosphothreonine" evidence="18">
    <location>
        <position position="266"/>
    </location>
</feature>
<feature type="modified residue" description="Phosphoserine" evidence="1">
    <location>
        <position position="290"/>
    </location>
</feature>
<feature type="modified residue" description="Phosphoserine" evidence="14 17 18">
    <location>
        <position position="295"/>
    </location>
</feature>
<feature type="modified residue" description="Citrulline" evidence="2">
    <location>
        <position position="300"/>
    </location>
</feature>
<feature type="modified residue" description="N6-acetyllysine" evidence="16">
    <location>
        <position position="333"/>
    </location>
</feature>
<feature type="modified residue" description="N6-acetyllysine" evidence="2">
    <location>
        <position position="353"/>
    </location>
</feature>
<feature type="modified residue" description="N6-acetyllysine; alternate" evidence="2">
    <location>
        <position position="364"/>
    </location>
</feature>
<feature type="modified residue" description="Phosphoserine" evidence="14 17">
    <location>
        <position position="365"/>
    </location>
</feature>
<feature type="cross-link" description="Glycyl lysine isopeptide (Lys-Gly) (interchain with G-Cter in SUMO2)" evidence="20">
    <location>
        <position position="239"/>
    </location>
</feature>
<feature type="cross-link" description="Glycyl lysine isopeptide (Lys-Gly) (interchain with G-Cter in SUMO2)" evidence="20">
    <location>
        <position position="327"/>
    </location>
</feature>
<feature type="cross-link" description="Glycyl lysine isopeptide (Lys-Gly) (interchain with G-Cter in SUMO1); alternate" evidence="19">
    <location>
        <position position="364"/>
    </location>
</feature>
<feature type="sequence conflict" description="In Ref. 1; AAA60281." evidence="9" ref="1">
    <original>C</original>
    <variation>V</variation>
    <location>
        <position position="3"/>
    </location>
</feature>
<feature type="sequence conflict" description="In Ref. 1; AAA60281." evidence="9" ref="1">
    <original>I</original>
    <variation>M</variation>
    <location>
        <position position="36"/>
    </location>
</feature>
<feature type="sequence conflict" description="In Ref. 1; AAA60281." evidence="9" ref="1">
    <original>S</original>
    <variation>R</variation>
    <location>
        <position position="63"/>
    </location>
</feature>
<feature type="sequence conflict" description="In Ref. 1; AAA60281." evidence="9" ref="1">
    <original>V</original>
    <variation>F</variation>
    <location>
        <position position="147"/>
    </location>
</feature>
<feature type="sequence conflict" description="In Ref. 1; AAA60281." evidence="9" ref="1">
    <location>
        <position position="201"/>
    </location>
</feature>
<evidence type="ECO:0000250" key="1">
    <source>
        <dbReference type="UniProtKB" id="P50878"/>
    </source>
</evidence>
<evidence type="ECO:0000250" key="2">
    <source>
        <dbReference type="UniProtKB" id="Q9D8E6"/>
    </source>
</evidence>
<evidence type="ECO:0000256" key="3">
    <source>
        <dbReference type="SAM" id="MobiDB-lite"/>
    </source>
</evidence>
<evidence type="ECO:0000269" key="4">
    <source>
    </source>
</evidence>
<evidence type="ECO:0000269" key="5">
    <source>
    </source>
</evidence>
<evidence type="ECO:0000269" key="6">
    <source>
    </source>
</evidence>
<evidence type="ECO:0000269" key="7">
    <source ref="8"/>
</evidence>
<evidence type="ECO:0000303" key="8">
    <source>
    </source>
</evidence>
<evidence type="ECO:0000305" key="9"/>
<evidence type="ECO:0007744" key="10">
    <source>
        <dbReference type="PDB" id="6LQM"/>
    </source>
</evidence>
<evidence type="ECO:0007744" key="11">
    <source>
        <dbReference type="PDB" id="6LSR"/>
    </source>
</evidence>
<evidence type="ECO:0007744" key="12">
    <source>
        <dbReference type="PDB" id="6LSS"/>
    </source>
</evidence>
<evidence type="ECO:0007744" key="13">
    <source>
        <dbReference type="PDB" id="6LU8"/>
    </source>
</evidence>
<evidence type="ECO:0007744" key="14">
    <source>
    </source>
</evidence>
<evidence type="ECO:0007744" key="15">
    <source>
    </source>
</evidence>
<evidence type="ECO:0007744" key="16">
    <source>
    </source>
</evidence>
<evidence type="ECO:0007744" key="17">
    <source>
    </source>
</evidence>
<evidence type="ECO:0007744" key="18">
    <source>
    </source>
</evidence>
<evidence type="ECO:0007744" key="19">
    <source>
    </source>
</evidence>
<evidence type="ECO:0007744" key="20">
    <source>
    </source>
</evidence>
<comment type="function">
    <text evidence="5 6">Component of the large ribosomal subunit. The ribosome is a large ribonucleoprotein complex responsible for the synthesis of proteins in the cell.</text>
</comment>
<comment type="subunit">
    <text evidence="1 4 5 6">Component of the large ribosomal subunit (PubMed:23636399, PubMed:32669547). May bind IPO9 with low affinity (PubMed:11823430). Interacts with RBM3 (By similarity).</text>
</comment>
<comment type="interaction">
    <interactant intactId="EBI-348313">
        <id>P36578</id>
    </interactant>
    <interactant intactId="EBI-466029">
        <id>P42858</id>
        <label>HTT</label>
    </interactant>
    <organismsDiffer>false</organismsDiffer>
    <experiments>14</experiments>
</comment>
<comment type="interaction">
    <interactant intactId="EBI-348313">
        <id>P36578</id>
    </interactant>
    <interactant intactId="EBI-358011">
        <id>Q99558</id>
        <label>MAP3K14</label>
    </interactant>
    <organismsDiffer>false</organismsDiffer>
    <experiments>3</experiments>
</comment>
<comment type="interaction">
    <interactant intactId="EBI-348313">
        <id>P36578</id>
    </interactant>
    <interactant intactId="EBI-356746">
        <id>P50914</id>
        <label>RPL14</label>
    </interactant>
    <organismsDiffer>false</organismsDiffer>
    <experiments>4</experiments>
</comment>
<comment type="interaction">
    <interactant intactId="EBI-348313">
        <id>P36578</id>
    </interactant>
    <interactant intactId="EBI-352694">
        <id>Q07020</id>
        <label>RPL18</label>
    </interactant>
    <organismsDiffer>false</organismsDiffer>
    <experiments>3</experiments>
</comment>
<comment type="interaction">
    <interactant intactId="EBI-348313">
        <id>P36578</id>
    </interactant>
    <interactant intactId="EBI-350523">
        <id>Q02543</id>
        <label>RPL18A</label>
    </interactant>
    <organismsDiffer>false</organismsDiffer>
    <experiments>3</experiments>
</comment>
<comment type="interaction">
    <interactant intactId="EBI-348313">
        <id>P36578</id>
    </interactant>
    <interactant intactId="EBI-366357">
        <id>P46779</id>
        <label>RPL28</label>
    </interactant>
    <organismsDiffer>false</organismsDiffer>
    <experiments>3</experiments>
</comment>
<comment type="interaction">
    <interactant intactId="EBI-348313">
        <id>P36578</id>
    </interactant>
    <interactant intactId="EBI-353105">
        <id>P60866</id>
        <label>RPS20</label>
    </interactant>
    <organismsDiffer>false</organismsDiffer>
    <experiments>5</experiments>
</comment>
<comment type="subcellular location">
    <subcellularLocation>
        <location evidence="5">Cytoplasm</location>
    </subcellularLocation>
</comment>
<comment type="PTM">
    <text evidence="2">Citrullinated by PADI4.</text>
</comment>
<comment type="similarity">
    <text evidence="9">Belongs to the universal ribosomal protein uL4 family.</text>
</comment>
<sequence length="427" mass="47697">MACARPLISVYSEKGESSGKNVTLPAVFKAPIRPDIVNFVHTNLRKNNRQPYAVSELAGHQTSAESWGTGRAVARIPRVRGGGTHRSGQGAFGNMCRGGRMFAPTKTWRRWHRRVNTTQKRYAICSALAASALPALVMSKGHRIEEVPELPLVVEDKVEGYKKTKEAVLLLKKLKAWNDIKKVYASQRMRAGKGKMRNRRRIQRRGPCIIYNEDNGIIKAFRNIPGITLLNVSKLNILKLAPGGHVGRFCIWTESAFRKLDELYGTWRKAASLKSNYNLPMHKMINTDLSRILKSPEIQRALRAPRKKIHRRVLKKNPLKNLRIMLKLNPYAKTMRRNTILRQARNHKLRVDKAAAAAAALQAKSDEKAAVAGKKPVVGKKGKKAAVGVKKQKKPLVGKKAAATKKPAPEKKPAEKKPTTEEKKPAA</sequence>
<reference key="1">
    <citation type="journal article" date="1993" name="Biochim. Biophys. Acta">
        <title>Human ribosomal protein L4: cloning and sequencing of the cDNA and primary structure of the protein.</title>
        <authorList>
            <person name="Bagni C."/>
            <person name="Mariottini P."/>
            <person name="Annesi F."/>
            <person name="Amaldi F."/>
        </authorList>
    </citation>
    <scope>NUCLEOTIDE SEQUENCE [MRNA]</scope>
    <source>
        <tissue>Brain</tissue>
    </source>
</reference>
<reference key="2">
    <citation type="submission" date="2004-01" db="EMBL/GenBank/DDBJ databases">
        <authorList>
            <person name="Bagni C."/>
        </authorList>
    </citation>
    <scope>SEQUENCE REVISION</scope>
</reference>
<reference key="3">
    <citation type="submission" date="1993-11" db="EMBL/GenBank/DDBJ databases">
        <authorList>
            <person name="Kato S."/>
        </authorList>
    </citation>
    <scope>NUCLEOTIDE SEQUENCE [MRNA]</scope>
    <source>
        <tissue>Lymphoma</tissue>
    </source>
</reference>
<reference key="4">
    <citation type="journal article" date="2002" name="Genome Res.">
        <title>The human ribosomal protein genes: sequencing and comparative analysis of 73 genes.</title>
        <authorList>
            <person name="Yoshihama M."/>
            <person name="Uechi T."/>
            <person name="Asakawa S."/>
            <person name="Kawasaki K."/>
            <person name="Kato S."/>
            <person name="Higa S."/>
            <person name="Maeda N."/>
            <person name="Minoshima S."/>
            <person name="Tanaka T."/>
            <person name="Shimizu N."/>
            <person name="Kenmochi N."/>
        </authorList>
    </citation>
    <scope>NUCLEOTIDE SEQUENCE [GENOMIC DNA]</scope>
</reference>
<reference key="5">
    <citation type="journal article" date="2004" name="Nat. Genet.">
        <title>Complete sequencing and characterization of 21,243 full-length human cDNAs.</title>
        <authorList>
            <person name="Ota T."/>
            <person name="Suzuki Y."/>
            <person name="Nishikawa T."/>
            <person name="Otsuki T."/>
            <person name="Sugiyama T."/>
            <person name="Irie R."/>
            <person name="Wakamatsu A."/>
            <person name="Hayashi K."/>
            <person name="Sato H."/>
            <person name="Nagai K."/>
            <person name="Kimura K."/>
            <person name="Makita H."/>
            <person name="Sekine M."/>
            <person name="Obayashi M."/>
            <person name="Nishi T."/>
            <person name="Shibahara T."/>
            <person name="Tanaka T."/>
            <person name="Ishii S."/>
            <person name="Yamamoto J."/>
            <person name="Saito K."/>
            <person name="Kawai Y."/>
            <person name="Isono Y."/>
            <person name="Nakamura Y."/>
            <person name="Nagahari K."/>
            <person name="Murakami K."/>
            <person name="Yasuda T."/>
            <person name="Iwayanagi T."/>
            <person name="Wagatsuma M."/>
            <person name="Shiratori A."/>
            <person name="Sudo H."/>
            <person name="Hosoiri T."/>
            <person name="Kaku Y."/>
            <person name="Kodaira H."/>
            <person name="Kondo H."/>
            <person name="Sugawara M."/>
            <person name="Takahashi M."/>
            <person name="Kanda K."/>
            <person name="Yokoi T."/>
            <person name="Furuya T."/>
            <person name="Kikkawa E."/>
            <person name="Omura Y."/>
            <person name="Abe K."/>
            <person name="Kamihara K."/>
            <person name="Katsuta N."/>
            <person name="Sato K."/>
            <person name="Tanikawa M."/>
            <person name="Yamazaki M."/>
            <person name="Ninomiya K."/>
            <person name="Ishibashi T."/>
            <person name="Yamashita H."/>
            <person name="Murakawa K."/>
            <person name="Fujimori K."/>
            <person name="Tanai H."/>
            <person name="Kimata M."/>
            <person name="Watanabe M."/>
            <person name="Hiraoka S."/>
            <person name="Chiba Y."/>
            <person name="Ishida S."/>
            <person name="Ono Y."/>
            <person name="Takiguchi S."/>
            <person name="Watanabe S."/>
            <person name="Yosida M."/>
            <person name="Hotuta T."/>
            <person name="Kusano J."/>
            <person name="Kanehori K."/>
            <person name="Takahashi-Fujii A."/>
            <person name="Hara H."/>
            <person name="Tanase T.-O."/>
            <person name="Nomura Y."/>
            <person name="Togiya S."/>
            <person name="Komai F."/>
            <person name="Hara R."/>
            <person name="Takeuchi K."/>
            <person name="Arita M."/>
            <person name="Imose N."/>
            <person name="Musashino K."/>
            <person name="Yuuki H."/>
            <person name="Oshima A."/>
            <person name="Sasaki N."/>
            <person name="Aotsuka S."/>
            <person name="Yoshikawa Y."/>
            <person name="Matsunawa H."/>
            <person name="Ichihara T."/>
            <person name="Shiohata N."/>
            <person name="Sano S."/>
            <person name="Moriya S."/>
            <person name="Momiyama H."/>
            <person name="Satoh N."/>
            <person name="Takami S."/>
            <person name="Terashima Y."/>
            <person name="Suzuki O."/>
            <person name="Nakagawa S."/>
            <person name="Senoh A."/>
            <person name="Mizoguchi H."/>
            <person name="Goto Y."/>
            <person name="Shimizu F."/>
            <person name="Wakebe H."/>
            <person name="Hishigaki H."/>
            <person name="Watanabe T."/>
            <person name="Sugiyama A."/>
            <person name="Takemoto M."/>
            <person name="Kawakami B."/>
            <person name="Yamazaki M."/>
            <person name="Watanabe K."/>
            <person name="Kumagai A."/>
            <person name="Itakura S."/>
            <person name="Fukuzumi Y."/>
            <person name="Fujimori Y."/>
            <person name="Komiyama M."/>
            <person name="Tashiro H."/>
            <person name="Tanigami A."/>
            <person name="Fujiwara T."/>
            <person name="Ono T."/>
            <person name="Yamada K."/>
            <person name="Fujii Y."/>
            <person name="Ozaki K."/>
            <person name="Hirao M."/>
            <person name="Ohmori Y."/>
            <person name="Kawabata A."/>
            <person name="Hikiji T."/>
            <person name="Kobatake N."/>
            <person name="Inagaki H."/>
            <person name="Ikema Y."/>
            <person name="Okamoto S."/>
            <person name="Okitani R."/>
            <person name="Kawakami T."/>
            <person name="Noguchi S."/>
            <person name="Itoh T."/>
            <person name="Shigeta K."/>
            <person name="Senba T."/>
            <person name="Matsumura K."/>
            <person name="Nakajima Y."/>
            <person name="Mizuno T."/>
            <person name="Morinaga M."/>
            <person name="Sasaki M."/>
            <person name="Togashi T."/>
            <person name="Oyama M."/>
            <person name="Hata H."/>
            <person name="Watanabe M."/>
            <person name="Komatsu T."/>
            <person name="Mizushima-Sugano J."/>
            <person name="Satoh T."/>
            <person name="Shirai Y."/>
            <person name="Takahashi Y."/>
            <person name="Nakagawa K."/>
            <person name="Okumura K."/>
            <person name="Nagase T."/>
            <person name="Nomura N."/>
            <person name="Kikuchi H."/>
            <person name="Masuho Y."/>
            <person name="Yamashita R."/>
            <person name="Nakai K."/>
            <person name="Yada T."/>
            <person name="Nakamura Y."/>
            <person name="Ohara O."/>
            <person name="Isogai T."/>
            <person name="Sugano S."/>
        </authorList>
    </citation>
    <scope>NUCLEOTIDE SEQUENCE [LARGE SCALE MRNA]</scope>
    <source>
        <tissue>Skeletal muscle</tissue>
    </source>
</reference>
<reference key="6">
    <citation type="submission" date="2005-07" db="EMBL/GenBank/DDBJ databases">
        <authorList>
            <person name="Mural R.J."/>
            <person name="Istrail S."/>
            <person name="Sutton G.G."/>
            <person name="Florea L."/>
            <person name="Halpern A.L."/>
            <person name="Mobarry C.M."/>
            <person name="Lippert R."/>
            <person name="Walenz B."/>
            <person name="Shatkay H."/>
            <person name="Dew I."/>
            <person name="Miller J.R."/>
            <person name="Flanigan M.J."/>
            <person name="Edwards N.J."/>
            <person name="Bolanos R."/>
            <person name="Fasulo D."/>
            <person name="Halldorsson B.V."/>
            <person name="Hannenhalli S."/>
            <person name="Turner R."/>
            <person name="Yooseph S."/>
            <person name="Lu F."/>
            <person name="Nusskern D.R."/>
            <person name="Shue B.C."/>
            <person name="Zheng X.H."/>
            <person name="Zhong F."/>
            <person name="Delcher A.L."/>
            <person name="Huson D.H."/>
            <person name="Kravitz S.A."/>
            <person name="Mouchard L."/>
            <person name="Reinert K."/>
            <person name="Remington K.A."/>
            <person name="Clark A.G."/>
            <person name="Waterman M.S."/>
            <person name="Eichler E.E."/>
            <person name="Adams M.D."/>
            <person name="Hunkapiller M.W."/>
            <person name="Myers E.W."/>
            <person name="Venter J.C."/>
        </authorList>
    </citation>
    <scope>NUCLEOTIDE SEQUENCE [LARGE SCALE GENOMIC DNA]</scope>
</reference>
<reference key="7">
    <citation type="journal article" date="2004" name="Genome Res.">
        <title>The status, quality, and expansion of the NIH full-length cDNA project: the Mammalian Gene Collection (MGC).</title>
        <authorList>
            <consortium name="The MGC Project Team"/>
        </authorList>
    </citation>
    <scope>NUCLEOTIDE SEQUENCE [LARGE SCALE MRNA]</scope>
    <source>
        <tissue>Colon</tissue>
        <tissue>Embryonic stem cell</tissue>
        <tissue>Eye</tissue>
        <tissue>Hippocampus</tissue>
        <tissue>Muscle</tissue>
        <tissue>Pancreas</tissue>
        <tissue>Skin</tissue>
    </source>
</reference>
<reference key="8">
    <citation type="submission" date="2006-05" db="UniProtKB">
        <authorList>
            <person name="Bienvenut W.V."/>
            <person name="Kanor S."/>
            <person name="Tissot J.-D."/>
            <person name="Quadroni M."/>
        </authorList>
    </citation>
    <scope>PROTEIN SEQUENCE OF 2-13</scope>
    <scope>CLEAVAGE OF INITIATOR METHIONINE</scope>
    <scope>ACETYLATION AT ALA-2</scope>
    <scope>IDENTIFICATION BY MASS SPECTROMETRY</scope>
    <source>
        <tissue>T-cell</tissue>
    </source>
</reference>
<reference key="9">
    <citation type="journal article" date="2002" name="EMBO J.">
        <title>Importins fulfill a dual function as nuclear import receptors and cytoplasmic chaperones for exposed basic domains.</title>
        <authorList>
            <person name="Jaekel S."/>
            <person name="Mingot J.-M."/>
            <person name="Schwarzmaier P."/>
            <person name="Hartmann E."/>
            <person name="Goerlich D."/>
        </authorList>
    </citation>
    <scope>INTERACTION WITH IPO9</scope>
</reference>
<reference key="10">
    <citation type="journal article" date="2003" name="Nature">
        <title>Proteomic characterization of the human centrosome by protein correlation profiling.</title>
        <authorList>
            <person name="Andersen J.S."/>
            <person name="Wilkinson C.J."/>
            <person name="Mayor T."/>
            <person name="Mortensen P."/>
            <person name="Nigg E.A."/>
            <person name="Mann M."/>
        </authorList>
    </citation>
    <scope>IDENTIFICATION BY MASS SPECTROMETRY</scope>
    <source>
        <tissue>Lymphoblast</tissue>
    </source>
</reference>
<reference key="11">
    <citation type="journal article" date="2008" name="Mol. Cell">
        <title>Kinase-selective enrichment enables quantitative phosphoproteomics of the kinome across the cell cycle.</title>
        <authorList>
            <person name="Daub H."/>
            <person name="Olsen J.V."/>
            <person name="Bairlein M."/>
            <person name="Gnad F."/>
            <person name="Oppermann F.S."/>
            <person name="Korner R."/>
            <person name="Greff Z."/>
            <person name="Keri G."/>
            <person name="Stemmann O."/>
            <person name="Mann M."/>
        </authorList>
    </citation>
    <scope>PHOSPHORYLATION [LARGE SCALE ANALYSIS] AT SER-295 AND SER-365</scope>
    <scope>IDENTIFICATION BY MASS SPECTROMETRY [LARGE SCALE ANALYSIS]</scope>
    <source>
        <tissue>Cervix carcinoma</tissue>
    </source>
</reference>
<reference key="12">
    <citation type="journal article" date="2008" name="Proc. Natl. Acad. Sci. U.S.A.">
        <title>A quantitative atlas of mitotic phosphorylation.</title>
        <authorList>
            <person name="Dephoure N."/>
            <person name="Zhou C."/>
            <person name="Villen J."/>
            <person name="Beausoleil S.A."/>
            <person name="Bakalarski C.E."/>
            <person name="Elledge S.J."/>
            <person name="Gygi S.P."/>
        </authorList>
    </citation>
    <scope>IDENTIFICATION BY MASS SPECTROMETRY [LARGE SCALE ANALYSIS]</scope>
    <source>
        <tissue>Cervix carcinoma</tissue>
    </source>
</reference>
<reference key="13">
    <citation type="journal article" date="2009" name="Anal. Chem.">
        <title>Lys-N and trypsin cover complementary parts of the phosphoproteome in a refined SCX-based approach.</title>
        <authorList>
            <person name="Gauci S."/>
            <person name="Helbig A.O."/>
            <person name="Slijper M."/>
            <person name="Krijgsveld J."/>
            <person name="Heck A.J."/>
            <person name="Mohammed S."/>
        </authorList>
    </citation>
    <scope>ACETYLATION [LARGE SCALE ANALYSIS] AT ALA-2</scope>
    <scope>CLEAVAGE OF INITIATOR METHIONINE [LARGE SCALE ANALYSIS]</scope>
    <scope>IDENTIFICATION BY MASS SPECTROMETRY [LARGE SCALE ANALYSIS]</scope>
</reference>
<reference key="14">
    <citation type="journal article" date="2009" name="Science">
        <title>Lysine acetylation targets protein complexes and co-regulates major cellular functions.</title>
        <authorList>
            <person name="Choudhary C."/>
            <person name="Kumar C."/>
            <person name="Gnad F."/>
            <person name="Nielsen M.L."/>
            <person name="Rehman M."/>
            <person name="Walther T.C."/>
            <person name="Olsen J.V."/>
            <person name="Mann M."/>
        </authorList>
    </citation>
    <scope>ACETYLATION [LARGE SCALE ANALYSIS] AT LYS-14; LYS-106 AND LYS-333</scope>
    <scope>IDENTIFICATION BY MASS SPECTROMETRY [LARGE SCALE ANALYSIS]</scope>
</reference>
<reference key="15">
    <citation type="journal article" date="2010" name="Sci. Signal.">
        <title>Quantitative phosphoproteomics reveals widespread full phosphorylation site occupancy during mitosis.</title>
        <authorList>
            <person name="Olsen J.V."/>
            <person name="Vermeulen M."/>
            <person name="Santamaria A."/>
            <person name="Kumar C."/>
            <person name="Miller M.L."/>
            <person name="Jensen L.J."/>
            <person name="Gnad F."/>
            <person name="Cox J."/>
            <person name="Jensen T.S."/>
            <person name="Nigg E.A."/>
            <person name="Brunak S."/>
            <person name="Mann M."/>
        </authorList>
    </citation>
    <scope>PHOSPHORYLATION [LARGE SCALE ANALYSIS] AT SER-295 AND SER-365</scope>
    <scope>IDENTIFICATION BY MASS SPECTROMETRY [LARGE SCALE ANALYSIS]</scope>
    <source>
        <tissue>Cervix carcinoma</tissue>
    </source>
</reference>
<reference key="16">
    <citation type="journal article" date="2011" name="BMC Syst. Biol.">
        <title>Initial characterization of the human central proteome.</title>
        <authorList>
            <person name="Burkard T.R."/>
            <person name="Planyavsky M."/>
            <person name="Kaupe I."/>
            <person name="Breitwieser F.P."/>
            <person name="Buerckstuemmer T."/>
            <person name="Bennett K.L."/>
            <person name="Superti-Furga G."/>
            <person name="Colinge J."/>
        </authorList>
    </citation>
    <scope>IDENTIFICATION BY MASS SPECTROMETRY [LARGE SCALE ANALYSIS]</scope>
</reference>
<reference key="17">
    <citation type="journal article" date="2013" name="J. Proteome Res.">
        <title>Toward a comprehensive characterization of a human cancer cell phosphoproteome.</title>
        <authorList>
            <person name="Zhou H."/>
            <person name="Di Palma S."/>
            <person name="Preisinger C."/>
            <person name="Peng M."/>
            <person name="Polat A.N."/>
            <person name="Heck A.J."/>
            <person name="Mohammed S."/>
        </authorList>
    </citation>
    <scope>PHOSPHORYLATION [LARGE SCALE ANALYSIS] AT THR-266 AND SER-295</scope>
    <scope>IDENTIFICATION BY MASS SPECTROMETRY [LARGE SCALE ANALYSIS]</scope>
    <source>
        <tissue>Cervix carcinoma</tissue>
        <tissue>Erythroleukemia</tissue>
    </source>
</reference>
<reference key="18">
    <citation type="journal article" date="2014" name="Curr. Opin. Struct. Biol.">
        <title>A new system for naming ribosomal proteins.</title>
        <authorList>
            <person name="Ban N."/>
            <person name="Beckmann R."/>
            <person name="Cate J.H.D."/>
            <person name="Dinman J.D."/>
            <person name="Dragon F."/>
            <person name="Ellis S.R."/>
            <person name="Lafontaine D.L.J."/>
            <person name="Lindahl L."/>
            <person name="Liljas A."/>
            <person name="Lipton J.M."/>
            <person name="McAlear M.A."/>
            <person name="Moore P.B."/>
            <person name="Noller H.F."/>
            <person name="Ortega J."/>
            <person name="Panse V.G."/>
            <person name="Ramakrishnan V."/>
            <person name="Spahn C.M.T."/>
            <person name="Steitz T.A."/>
            <person name="Tchorzewski M."/>
            <person name="Tollervey D."/>
            <person name="Warren A.J."/>
            <person name="Williamson J.R."/>
            <person name="Wilson D."/>
            <person name="Yonath A."/>
            <person name="Yusupov M."/>
        </authorList>
    </citation>
    <scope>NOMENCLATURE</scope>
</reference>
<reference key="19">
    <citation type="journal article" date="2014" name="J. Proteomics">
        <title>An enzyme assisted RP-RPLC approach for in-depth analysis of human liver phosphoproteome.</title>
        <authorList>
            <person name="Bian Y."/>
            <person name="Song C."/>
            <person name="Cheng K."/>
            <person name="Dong M."/>
            <person name="Wang F."/>
            <person name="Huang J."/>
            <person name="Sun D."/>
            <person name="Wang L."/>
            <person name="Ye M."/>
            <person name="Zou H."/>
        </authorList>
    </citation>
    <scope>IDENTIFICATION BY MASS SPECTROMETRY [LARGE SCALE ANALYSIS]</scope>
    <source>
        <tissue>Liver</tissue>
    </source>
</reference>
<reference key="20">
    <citation type="journal article" date="2014" name="Proc. Natl. Acad. Sci. U.S.A.">
        <title>Mapping of SUMO sites and analysis of SUMOylation changes induced by external stimuli.</title>
        <authorList>
            <person name="Impens F."/>
            <person name="Radoshevich L."/>
            <person name="Cossart P."/>
            <person name="Ribet D."/>
        </authorList>
    </citation>
    <scope>SUMOYLATION [LARGE SCALE ANALYSIS] AT LYS-364</scope>
    <scope>IDENTIFICATION BY MASS SPECTROMETRY [LARGE SCALE ANALYSIS]</scope>
</reference>
<reference key="21">
    <citation type="journal article" date="2015" name="Proteomics">
        <title>N-terminome analysis of the human mitochondrial proteome.</title>
        <authorList>
            <person name="Vaca Jacome A.S."/>
            <person name="Rabilloud T."/>
            <person name="Schaeffer-Reiss C."/>
            <person name="Rompais M."/>
            <person name="Ayoub D."/>
            <person name="Lane L."/>
            <person name="Bairoch A."/>
            <person name="Van Dorsselaer A."/>
            <person name="Carapito C."/>
        </authorList>
    </citation>
    <scope>IDENTIFICATION BY MASS SPECTROMETRY [LARGE SCALE ANALYSIS]</scope>
</reference>
<reference key="22">
    <citation type="journal article" date="2017" name="Nat. Struct. Mol. Biol.">
        <title>Site-specific mapping of the human SUMO proteome reveals co-modification with phosphorylation.</title>
        <authorList>
            <person name="Hendriks I.A."/>
            <person name="Lyon D."/>
            <person name="Young C."/>
            <person name="Jensen L.J."/>
            <person name="Vertegaal A.C."/>
            <person name="Nielsen M.L."/>
        </authorList>
    </citation>
    <scope>SUMOYLATION [LARGE SCALE ANALYSIS] AT LYS-239 AND LYS-327</scope>
    <scope>IDENTIFICATION BY MASS SPECTROMETRY [LARGE SCALE ANALYSIS]</scope>
</reference>
<reference key="23">
    <citation type="journal article" date="2013" name="Nature">
        <title>Structures of the human and Drosophila 80S ribosome.</title>
        <authorList>
            <person name="Anger A.M."/>
            <person name="Armache J.P."/>
            <person name="Berninghausen O."/>
            <person name="Habeck M."/>
            <person name="Subklewe M."/>
            <person name="Wilson D.N."/>
            <person name="Beckmann R."/>
        </authorList>
    </citation>
    <scope>STRUCTURE BY ELECTRON MICROSCOPY (5.0 ANGSTROMS)</scope>
    <scope>FUNCTION</scope>
    <scope>SUBUNIT</scope>
    <scope>SUBCELLULAR LOCATION</scope>
</reference>
<reference evidence="10 11 12 13" key="24">
    <citation type="journal article" date="2020" name="Nat. Commun.">
        <title>Structural snapshots of human pre-60S ribosomal particles before and after nuclear export.</title>
        <authorList>
            <person name="Liang X."/>
            <person name="Zuo M.Q."/>
            <person name="Zhang Y."/>
            <person name="Li N."/>
            <person name="Ma C."/>
            <person name="Dong M.Q."/>
            <person name="Gao N."/>
        </authorList>
    </citation>
    <scope>STRUCTURE BY ELECTRON MICROSCOPY (3.09 ANGSTROMS)</scope>
    <scope>FUNCTION</scope>
    <scope>SUBUNIT</scope>
</reference>
<organism>
    <name type="scientific">Homo sapiens</name>
    <name type="common">Human</name>
    <dbReference type="NCBI Taxonomy" id="9606"/>
    <lineage>
        <taxon>Eukaryota</taxon>
        <taxon>Metazoa</taxon>
        <taxon>Chordata</taxon>
        <taxon>Craniata</taxon>
        <taxon>Vertebrata</taxon>
        <taxon>Euteleostomi</taxon>
        <taxon>Mammalia</taxon>
        <taxon>Eutheria</taxon>
        <taxon>Euarchontoglires</taxon>
        <taxon>Primates</taxon>
        <taxon>Haplorrhini</taxon>
        <taxon>Catarrhini</taxon>
        <taxon>Hominidae</taxon>
        <taxon>Homo</taxon>
    </lineage>
</organism>
<gene>
    <name type="primary">RPL4</name>
    <name type="synonym">RPL1</name>
</gene>
<accession>P36578</accession>
<accession>A8K502</accession>
<accession>P39029</accession>
<accession>Q4VBR0</accession>
<accession>Q969Z9</accession>
<name>RL4_HUMAN</name>
<protein>
    <recommendedName>
        <fullName evidence="8">Large ribosomal subunit protein uL4</fullName>
    </recommendedName>
    <alternativeName>
        <fullName>60S ribosomal protein L1</fullName>
    </alternativeName>
    <alternativeName>
        <fullName>60S ribosomal protein L4</fullName>
    </alternativeName>
</protein>
<dbReference type="EMBL" id="L20868">
    <property type="protein sequence ID" value="AAA60281.2"/>
    <property type="molecule type" value="mRNA"/>
</dbReference>
<dbReference type="EMBL" id="D23660">
    <property type="protein sequence ID" value="BAA04887.1"/>
    <property type="molecule type" value="mRNA"/>
</dbReference>
<dbReference type="EMBL" id="AB061820">
    <property type="protein sequence ID" value="BAB79458.1"/>
    <property type="molecule type" value="Genomic_DNA"/>
</dbReference>
<dbReference type="EMBL" id="AK291117">
    <property type="protein sequence ID" value="BAF83806.1"/>
    <property type="molecule type" value="mRNA"/>
</dbReference>
<dbReference type="EMBL" id="AK291859">
    <property type="protein sequence ID" value="BAF84548.1"/>
    <property type="molecule type" value="mRNA"/>
</dbReference>
<dbReference type="EMBL" id="CH471082">
    <property type="protein sequence ID" value="EAW77776.1"/>
    <property type="molecule type" value="Genomic_DNA"/>
</dbReference>
<dbReference type="EMBL" id="BC001365">
    <property type="protein sequence ID" value="AAH01365.1"/>
    <property type="molecule type" value="mRNA"/>
</dbReference>
<dbReference type="EMBL" id="BC005817">
    <property type="protein sequence ID" value="AAH05817.1"/>
    <property type="molecule type" value="mRNA"/>
</dbReference>
<dbReference type="EMBL" id="BC007748">
    <property type="protein sequence ID" value="AAH07748.1"/>
    <property type="molecule type" value="mRNA"/>
</dbReference>
<dbReference type="EMBL" id="BC007996">
    <property type="protein sequence ID" value="AAH07996.1"/>
    <property type="molecule type" value="mRNA"/>
</dbReference>
<dbReference type="EMBL" id="BC009888">
    <property type="protein sequence ID" value="AAH09888.1"/>
    <property type="molecule type" value="mRNA"/>
</dbReference>
<dbReference type="EMBL" id="BC010151">
    <property type="protein sequence ID" value="AAH10151.1"/>
    <property type="molecule type" value="mRNA"/>
</dbReference>
<dbReference type="EMBL" id="BC014653">
    <property type="protein sequence ID" value="AAH14653.1"/>
    <property type="molecule type" value="mRNA"/>
</dbReference>
<dbReference type="EMBL" id="BC066925">
    <property type="protein sequence ID" value="AAH66925.1"/>
    <property type="molecule type" value="mRNA"/>
</dbReference>
<dbReference type="EMBL" id="BC095427">
    <property type="protein sequence ID" value="AAH95427.1"/>
    <property type="molecule type" value="mRNA"/>
</dbReference>
<dbReference type="CCDS" id="CCDS10218.1"/>
<dbReference type="PIR" id="T09551">
    <property type="entry name" value="T09551"/>
</dbReference>
<dbReference type="RefSeq" id="NP_000959.2">
    <property type="nucleotide sequence ID" value="NM_000968.3"/>
</dbReference>
<dbReference type="PDB" id="4UG0">
    <property type="method" value="EM"/>
    <property type="chains" value="LC=1-427"/>
</dbReference>
<dbReference type="PDB" id="4V6X">
    <property type="method" value="EM"/>
    <property type="resolution" value="5.00 A"/>
    <property type="chains" value="CC=1-427"/>
</dbReference>
<dbReference type="PDB" id="5A8L">
    <property type="method" value="EM"/>
    <property type="resolution" value="3.80 A"/>
    <property type="chains" value="H=1-427"/>
</dbReference>
<dbReference type="PDB" id="5AJ0">
    <property type="method" value="EM"/>
    <property type="resolution" value="3.50 A"/>
    <property type="chains" value="AC=1-427"/>
</dbReference>
<dbReference type="PDB" id="5LKS">
    <property type="method" value="EM"/>
    <property type="resolution" value="3.60 A"/>
    <property type="chains" value="LC=1-427"/>
</dbReference>
<dbReference type="PDB" id="5T2C">
    <property type="method" value="EM"/>
    <property type="resolution" value="3.60 A"/>
    <property type="chains" value="F=1-427"/>
</dbReference>
<dbReference type="PDB" id="6IP5">
    <property type="method" value="EM"/>
    <property type="resolution" value="3.90 A"/>
    <property type="chains" value="1F=1-427"/>
</dbReference>
<dbReference type="PDB" id="6IP6">
    <property type="method" value="EM"/>
    <property type="resolution" value="4.50 A"/>
    <property type="chains" value="1F=1-427"/>
</dbReference>
<dbReference type="PDB" id="6IP8">
    <property type="method" value="EM"/>
    <property type="resolution" value="3.90 A"/>
    <property type="chains" value="1F=1-427"/>
</dbReference>
<dbReference type="PDB" id="6LQM">
    <property type="method" value="EM"/>
    <property type="resolution" value="3.09 A"/>
    <property type="chains" value="D=1-427"/>
</dbReference>
<dbReference type="PDB" id="6LSR">
    <property type="method" value="EM"/>
    <property type="resolution" value="3.13 A"/>
    <property type="chains" value="D=1-427"/>
</dbReference>
<dbReference type="PDB" id="6LSS">
    <property type="method" value="EM"/>
    <property type="resolution" value="3.23 A"/>
    <property type="chains" value="D=1-427"/>
</dbReference>
<dbReference type="PDB" id="6LU8">
    <property type="method" value="EM"/>
    <property type="resolution" value="3.13 A"/>
    <property type="chains" value="D=1-427"/>
</dbReference>
<dbReference type="PDB" id="6OLE">
    <property type="method" value="EM"/>
    <property type="resolution" value="3.10 A"/>
    <property type="chains" value="C=3-365"/>
</dbReference>
<dbReference type="PDB" id="6OLF">
    <property type="method" value="EM"/>
    <property type="resolution" value="3.90 A"/>
    <property type="chains" value="C=3-365"/>
</dbReference>
<dbReference type="PDB" id="6OLG">
    <property type="method" value="EM"/>
    <property type="resolution" value="3.40 A"/>
    <property type="chains" value="AC=3-365"/>
</dbReference>
<dbReference type="PDB" id="6OLI">
    <property type="method" value="EM"/>
    <property type="resolution" value="3.50 A"/>
    <property type="chains" value="C=3-365"/>
</dbReference>
<dbReference type="PDB" id="6OLZ">
    <property type="method" value="EM"/>
    <property type="resolution" value="3.90 A"/>
    <property type="chains" value="AC=3-365"/>
</dbReference>
<dbReference type="PDB" id="6OM0">
    <property type="method" value="EM"/>
    <property type="resolution" value="3.10 A"/>
    <property type="chains" value="C=3-365"/>
</dbReference>
<dbReference type="PDB" id="6OM7">
    <property type="method" value="EM"/>
    <property type="resolution" value="3.70 A"/>
    <property type="chains" value="C=3-365"/>
</dbReference>
<dbReference type="PDB" id="6QZP">
    <property type="method" value="EM"/>
    <property type="resolution" value="2.90 A"/>
    <property type="chains" value="LC=1-368"/>
</dbReference>
<dbReference type="PDB" id="6W6L">
    <property type="method" value="EM"/>
    <property type="resolution" value="3.84 A"/>
    <property type="chains" value="C=1-427"/>
</dbReference>
<dbReference type="PDB" id="6XA1">
    <property type="method" value="EM"/>
    <property type="resolution" value="2.80 A"/>
    <property type="chains" value="LC=1-358"/>
</dbReference>
<dbReference type="PDB" id="6Y0G">
    <property type="method" value="EM"/>
    <property type="resolution" value="3.20 A"/>
    <property type="chains" value="LC=1-427"/>
</dbReference>
<dbReference type="PDB" id="6Y2L">
    <property type="method" value="EM"/>
    <property type="resolution" value="3.00 A"/>
    <property type="chains" value="LC=1-427"/>
</dbReference>
<dbReference type="PDB" id="6Y57">
    <property type="method" value="EM"/>
    <property type="resolution" value="3.50 A"/>
    <property type="chains" value="LC=1-427"/>
</dbReference>
<dbReference type="PDB" id="6Y6X">
    <property type="method" value="EM"/>
    <property type="resolution" value="2.80 A"/>
    <property type="chains" value="LC=1-368"/>
</dbReference>
<dbReference type="PDB" id="6Z6L">
    <property type="method" value="EM"/>
    <property type="resolution" value="3.00 A"/>
    <property type="chains" value="LC=1-427"/>
</dbReference>
<dbReference type="PDB" id="6Z6M">
    <property type="method" value="EM"/>
    <property type="resolution" value="3.10 A"/>
    <property type="chains" value="LC=1-427"/>
</dbReference>
<dbReference type="PDB" id="6Z6N">
    <property type="method" value="EM"/>
    <property type="resolution" value="2.90 A"/>
    <property type="chains" value="LC=1-427"/>
</dbReference>
<dbReference type="PDB" id="6ZM7">
    <property type="method" value="EM"/>
    <property type="resolution" value="2.70 A"/>
    <property type="chains" value="LC=1-427"/>
</dbReference>
<dbReference type="PDB" id="6ZME">
    <property type="method" value="EM"/>
    <property type="resolution" value="3.00 A"/>
    <property type="chains" value="LC=1-427"/>
</dbReference>
<dbReference type="PDB" id="6ZMI">
    <property type="method" value="EM"/>
    <property type="resolution" value="2.60 A"/>
    <property type="chains" value="LC=1-427"/>
</dbReference>
<dbReference type="PDB" id="6ZMO">
    <property type="method" value="EM"/>
    <property type="resolution" value="3.10 A"/>
    <property type="chains" value="LC=1-427"/>
</dbReference>
<dbReference type="PDB" id="7BHP">
    <property type="method" value="EM"/>
    <property type="resolution" value="3.30 A"/>
    <property type="chains" value="LC=1-427"/>
</dbReference>
<dbReference type="PDB" id="7F5S">
    <property type="method" value="EM"/>
    <property type="resolution" value="2.72 A"/>
    <property type="chains" value="LC=1-427"/>
</dbReference>
<dbReference type="PDB" id="7OW7">
    <property type="method" value="EM"/>
    <property type="resolution" value="2.20 A"/>
    <property type="chains" value="F=1-427"/>
</dbReference>
<dbReference type="PDB" id="7QVP">
    <property type="method" value="EM"/>
    <property type="resolution" value="3.00 A"/>
    <property type="chains" value="LC/MC=1-427"/>
</dbReference>
<dbReference type="PDB" id="7XNX">
    <property type="method" value="EM"/>
    <property type="resolution" value="2.70 A"/>
    <property type="chains" value="LC=1-427"/>
</dbReference>
<dbReference type="PDB" id="7XNY">
    <property type="method" value="EM"/>
    <property type="resolution" value="2.50 A"/>
    <property type="chains" value="LC=1-427"/>
</dbReference>
<dbReference type="PDB" id="8A3D">
    <property type="method" value="EM"/>
    <property type="resolution" value="1.67 A"/>
    <property type="chains" value="F=1-427"/>
</dbReference>
<dbReference type="PDB" id="8FKP">
    <property type="method" value="EM"/>
    <property type="resolution" value="2.85 A"/>
    <property type="chains" value="SA=1-427"/>
</dbReference>
<dbReference type="PDB" id="8FKQ">
    <property type="method" value="EM"/>
    <property type="resolution" value="2.76 A"/>
    <property type="chains" value="SA=1-427"/>
</dbReference>
<dbReference type="PDB" id="8FKR">
    <property type="method" value="EM"/>
    <property type="resolution" value="2.89 A"/>
    <property type="chains" value="SA=1-427"/>
</dbReference>
<dbReference type="PDB" id="8FKS">
    <property type="method" value="EM"/>
    <property type="resolution" value="2.88 A"/>
    <property type="chains" value="SA=1-427"/>
</dbReference>
<dbReference type="PDB" id="8FKT">
    <property type="method" value="EM"/>
    <property type="resolution" value="2.81 A"/>
    <property type="chains" value="SA=1-427"/>
</dbReference>
<dbReference type="PDB" id="8FKU">
    <property type="method" value="EM"/>
    <property type="resolution" value="2.82 A"/>
    <property type="chains" value="SA=1-427"/>
</dbReference>
<dbReference type="PDB" id="8FKV">
    <property type="method" value="EM"/>
    <property type="resolution" value="2.47 A"/>
    <property type="chains" value="SA=1-427"/>
</dbReference>
<dbReference type="PDB" id="8FKW">
    <property type="method" value="EM"/>
    <property type="resolution" value="2.50 A"/>
    <property type="chains" value="SA=1-427"/>
</dbReference>
<dbReference type="PDB" id="8FKX">
    <property type="method" value="EM"/>
    <property type="resolution" value="2.59 A"/>
    <property type="chains" value="SA=1-427"/>
</dbReference>
<dbReference type="PDB" id="8FKY">
    <property type="method" value="EM"/>
    <property type="resolution" value="2.67 A"/>
    <property type="chains" value="SA=1-427"/>
</dbReference>
<dbReference type="PDB" id="8FKZ">
    <property type="method" value="EM"/>
    <property type="resolution" value="3.04 A"/>
    <property type="chains" value="SA=1-427"/>
</dbReference>
<dbReference type="PDB" id="8FL0">
    <property type="method" value="EM"/>
    <property type="resolution" value="2.91 A"/>
    <property type="chains" value="SA=1-427"/>
</dbReference>
<dbReference type="PDB" id="8FL2">
    <property type="method" value="EM"/>
    <property type="resolution" value="2.67 A"/>
    <property type="chains" value="SA=1-427"/>
</dbReference>
<dbReference type="PDB" id="8FL3">
    <property type="method" value="EM"/>
    <property type="resolution" value="2.53 A"/>
    <property type="chains" value="SA=1-427"/>
</dbReference>
<dbReference type="PDB" id="8FL4">
    <property type="method" value="EM"/>
    <property type="resolution" value="2.89 A"/>
    <property type="chains" value="SA=1-427"/>
</dbReference>
<dbReference type="PDB" id="8FL6">
    <property type="method" value="EM"/>
    <property type="resolution" value="2.62 A"/>
    <property type="chains" value="SA=1-427"/>
</dbReference>
<dbReference type="PDB" id="8FL7">
    <property type="method" value="EM"/>
    <property type="resolution" value="2.55 A"/>
    <property type="chains" value="SA=1-427"/>
</dbReference>
<dbReference type="PDB" id="8FL9">
    <property type="method" value="EM"/>
    <property type="resolution" value="2.75 A"/>
    <property type="chains" value="SA=1-427"/>
</dbReference>
<dbReference type="PDB" id="8FLA">
    <property type="method" value="EM"/>
    <property type="resolution" value="2.63 A"/>
    <property type="chains" value="SA=1-427"/>
</dbReference>
<dbReference type="PDB" id="8FLB">
    <property type="method" value="EM"/>
    <property type="resolution" value="2.55 A"/>
    <property type="chains" value="SA=1-427"/>
</dbReference>
<dbReference type="PDB" id="8FLC">
    <property type="method" value="EM"/>
    <property type="resolution" value="2.76 A"/>
    <property type="chains" value="SA=1-427"/>
</dbReference>
<dbReference type="PDB" id="8FLD">
    <property type="method" value="EM"/>
    <property type="resolution" value="2.58 A"/>
    <property type="chains" value="SA=1-427"/>
</dbReference>
<dbReference type="PDB" id="8FLE">
    <property type="method" value="EM"/>
    <property type="resolution" value="2.48 A"/>
    <property type="chains" value="SA=1-427"/>
</dbReference>
<dbReference type="PDB" id="8FLF">
    <property type="method" value="EM"/>
    <property type="resolution" value="2.65 A"/>
    <property type="chains" value="SA=1-427"/>
</dbReference>
<dbReference type="PDB" id="8G5Y">
    <property type="method" value="EM"/>
    <property type="resolution" value="2.29 A"/>
    <property type="chains" value="LC=1-427"/>
</dbReference>
<dbReference type="PDB" id="8G5Z">
    <property type="method" value="EM"/>
    <property type="resolution" value="2.64 A"/>
    <property type="chains" value="LC=1-368"/>
</dbReference>
<dbReference type="PDB" id="8G60">
    <property type="method" value="EM"/>
    <property type="resolution" value="2.54 A"/>
    <property type="chains" value="LC=1-427"/>
</dbReference>
<dbReference type="PDB" id="8G61">
    <property type="method" value="EM"/>
    <property type="resolution" value="2.94 A"/>
    <property type="chains" value="LC=1-427"/>
</dbReference>
<dbReference type="PDB" id="8G6J">
    <property type="method" value="EM"/>
    <property type="resolution" value="2.80 A"/>
    <property type="chains" value="LC=1-427"/>
</dbReference>
<dbReference type="PDB" id="8GLP">
    <property type="method" value="EM"/>
    <property type="resolution" value="1.67 A"/>
    <property type="chains" value="LC=1-427"/>
</dbReference>
<dbReference type="PDB" id="8IDT">
    <property type="method" value="EM"/>
    <property type="resolution" value="2.80 A"/>
    <property type="chains" value="D=1-427"/>
</dbReference>
<dbReference type="PDB" id="8IDY">
    <property type="method" value="EM"/>
    <property type="resolution" value="3.00 A"/>
    <property type="chains" value="D=1-427"/>
</dbReference>
<dbReference type="PDB" id="8IE3">
    <property type="method" value="EM"/>
    <property type="resolution" value="3.30 A"/>
    <property type="chains" value="D=1-427"/>
</dbReference>
<dbReference type="PDB" id="8IFD">
    <property type="method" value="EM"/>
    <property type="resolution" value="2.59 A"/>
    <property type="chains" value="1F=1-427"/>
</dbReference>
<dbReference type="PDB" id="8IFE">
    <property type="method" value="EM"/>
    <property type="resolution" value="2.57 A"/>
    <property type="chains" value="1F=1-427"/>
</dbReference>
<dbReference type="PDB" id="8INE">
    <property type="method" value="EM"/>
    <property type="resolution" value="3.20 A"/>
    <property type="chains" value="D=1-427"/>
</dbReference>
<dbReference type="PDB" id="8INF">
    <property type="method" value="EM"/>
    <property type="resolution" value="3.00 A"/>
    <property type="chains" value="D=1-427"/>
</dbReference>
<dbReference type="PDB" id="8INK">
    <property type="method" value="EM"/>
    <property type="resolution" value="3.20 A"/>
    <property type="chains" value="D=1-427"/>
</dbReference>
<dbReference type="PDB" id="8IPD">
    <property type="method" value="EM"/>
    <property type="resolution" value="3.20 A"/>
    <property type="chains" value="D=1-427"/>
</dbReference>
<dbReference type="PDB" id="8IPX">
    <property type="method" value="EM"/>
    <property type="resolution" value="4.30 A"/>
    <property type="chains" value="D=1-427"/>
</dbReference>
<dbReference type="PDB" id="8IPY">
    <property type="method" value="EM"/>
    <property type="resolution" value="3.20 A"/>
    <property type="chains" value="D=1-427"/>
</dbReference>
<dbReference type="PDB" id="8IR1">
    <property type="method" value="EM"/>
    <property type="resolution" value="3.30 A"/>
    <property type="chains" value="D=1-427"/>
</dbReference>
<dbReference type="PDB" id="8IR3">
    <property type="method" value="EM"/>
    <property type="resolution" value="3.50 A"/>
    <property type="chains" value="D=1-427"/>
</dbReference>
<dbReference type="PDB" id="8JDJ">
    <property type="method" value="EM"/>
    <property type="resolution" value="2.50 A"/>
    <property type="chains" value="I=1-427"/>
</dbReference>
<dbReference type="PDB" id="8JDK">
    <property type="method" value="EM"/>
    <property type="resolution" value="2.26 A"/>
    <property type="chains" value="I=1-427"/>
</dbReference>
<dbReference type="PDB" id="8JDL">
    <property type="method" value="EM"/>
    <property type="resolution" value="2.42 A"/>
    <property type="chains" value="I=1-427"/>
</dbReference>
<dbReference type="PDB" id="8JDM">
    <property type="method" value="EM"/>
    <property type="resolution" value="2.67 A"/>
    <property type="chains" value="I=1-427"/>
</dbReference>
<dbReference type="PDB" id="8K2C">
    <property type="method" value="EM"/>
    <property type="resolution" value="2.40 A"/>
    <property type="chains" value="LC=1-427"/>
</dbReference>
<dbReference type="PDB" id="8OHD">
    <property type="method" value="EM"/>
    <property type="resolution" value="3.10 A"/>
    <property type="chains" value="LC=1-427"/>
</dbReference>
<dbReference type="PDB" id="8OJ0">
    <property type="method" value="EM"/>
    <property type="resolution" value="3.30 A"/>
    <property type="chains" value="LC=1-427"/>
</dbReference>
<dbReference type="PDB" id="8OJ5">
    <property type="method" value="EM"/>
    <property type="resolution" value="2.90 A"/>
    <property type="chains" value="LC=1-427"/>
</dbReference>
<dbReference type="PDB" id="8OJ8">
    <property type="method" value="EM"/>
    <property type="resolution" value="3.30 A"/>
    <property type="chains" value="LC=1-427"/>
</dbReference>
<dbReference type="PDB" id="8QFD">
    <property type="method" value="EM"/>
    <property type="resolution" value="2.20 A"/>
    <property type="chains" value="C=1-427"/>
</dbReference>
<dbReference type="PDB" id="8QOI">
    <property type="method" value="EM"/>
    <property type="resolution" value="1.90 A"/>
    <property type="chains" value="LC=1-368"/>
</dbReference>
<dbReference type="PDB" id="8QYX">
    <property type="method" value="EM"/>
    <property type="resolution" value="1.78 A"/>
    <property type="chains" value="F2=1-427"/>
</dbReference>
<dbReference type="PDB" id="8RL2">
    <property type="method" value="EM"/>
    <property type="resolution" value="2.84 A"/>
    <property type="chains" value="LC=1-427"/>
</dbReference>
<dbReference type="PDB" id="8UKB">
    <property type="method" value="EM"/>
    <property type="resolution" value="3.05 A"/>
    <property type="chains" value="LC=1-368"/>
</dbReference>
<dbReference type="PDB" id="8XSX">
    <property type="method" value="EM"/>
    <property type="resolution" value="2.40 A"/>
    <property type="chains" value="LC=1-427"/>
</dbReference>
<dbReference type="PDB" id="8XSY">
    <property type="method" value="EM"/>
    <property type="resolution" value="3.00 A"/>
    <property type="chains" value="LC=1-427"/>
</dbReference>
<dbReference type="PDB" id="8XSZ">
    <property type="method" value="EM"/>
    <property type="resolution" value="3.20 A"/>
    <property type="chains" value="LC=1-427"/>
</dbReference>
<dbReference type="PDB" id="8Y0W">
    <property type="method" value="EM"/>
    <property type="resolution" value="3.40 A"/>
    <property type="chains" value="LC=1-427"/>
</dbReference>
<dbReference type="PDB" id="8Y0X">
    <property type="method" value="EM"/>
    <property type="resolution" value="3.30 A"/>
    <property type="chains" value="LC=1-427"/>
</dbReference>
<dbReference type="PDB" id="8YOO">
    <property type="method" value="EM"/>
    <property type="resolution" value="2.00 A"/>
    <property type="chains" value="LC=1-427"/>
</dbReference>
<dbReference type="PDB" id="8YOP">
    <property type="method" value="EM"/>
    <property type="resolution" value="2.20 A"/>
    <property type="chains" value="LC=1-427"/>
</dbReference>
<dbReference type="PDB" id="9C3H">
    <property type="method" value="EM"/>
    <property type="resolution" value="2.00 A"/>
    <property type="chains" value="LC=1-427"/>
</dbReference>
<dbReference type="PDB" id="9FPZ">
    <property type="method" value="EM"/>
    <property type="resolution" value="2.69 A"/>
    <property type="chains" value="LC=1-427"/>
</dbReference>
<dbReference type="PDB" id="9FQ0">
    <property type="method" value="EM"/>
    <property type="resolution" value="4.67 A"/>
    <property type="chains" value="LC=1-427"/>
</dbReference>
<dbReference type="PDB" id="9G8M">
    <property type="method" value="EM"/>
    <property type="resolution" value="3.30 A"/>
    <property type="chains" value="LC=1-427"/>
</dbReference>
<dbReference type="PDB" id="9GMO">
    <property type="method" value="EM"/>
    <property type="resolution" value="2.59 A"/>
    <property type="chains" value="F=1-427"/>
</dbReference>
<dbReference type="PDBsum" id="4UG0"/>
<dbReference type="PDBsum" id="4V6X"/>
<dbReference type="PDBsum" id="5A8L"/>
<dbReference type="PDBsum" id="5AJ0"/>
<dbReference type="PDBsum" id="5LKS"/>
<dbReference type="PDBsum" id="5T2C"/>
<dbReference type="PDBsum" id="6IP5"/>
<dbReference type="PDBsum" id="6IP6"/>
<dbReference type="PDBsum" id="6IP8"/>
<dbReference type="PDBsum" id="6LQM"/>
<dbReference type="PDBsum" id="6LSR"/>
<dbReference type="PDBsum" id="6LSS"/>
<dbReference type="PDBsum" id="6LU8"/>
<dbReference type="PDBsum" id="6OLE"/>
<dbReference type="PDBsum" id="6OLF"/>
<dbReference type="PDBsum" id="6OLG"/>
<dbReference type="PDBsum" id="6OLI"/>
<dbReference type="PDBsum" id="6OLZ"/>
<dbReference type="PDBsum" id="6OM0"/>
<dbReference type="PDBsum" id="6OM7"/>
<dbReference type="PDBsum" id="6QZP"/>
<dbReference type="PDBsum" id="6W6L"/>
<dbReference type="PDBsum" id="6XA1"/>
<dbReference type="PDBsum" id="6Y0G"/>
<dbReference type="PDBsum" id="6Y2L"/>
<dbReference type="PDBsum" id="6Y57"/>
<dbReference type="PDBsum" id="6Y6X"/>
<dbReference type="PDBsum" id="6Z6L"/>
<dbReference type="PDBsum" id="6Z6M"/>
<dbReference type="PDBsum" id="6Z6N"/>
<dbReference type="PDBsum" id="6ZM7"/>
<dbReference type="PDBsum" id="6ZME"/>
<dbReference type="PDBsum" id="6ZMI"/>
<dbReference type="PDBsum" id="6ZMO"/>
<dbReference type="PDBsum" id="7BHP"/>
<dbReference type="PDBsum" id="7F5S"/>
<dbReference type="PDBsum" id="7OW7"/>
<dbReference type="PDBsum" id="7QVP"/>
<dbReference type="PDBsum" id="7XNX"/>
<dbReference type="PDBsum" id="7XNY"/>
<dbReference type="PDBsum" id="8A3D"/>
<dbReference type="PDBsum" id="8FKP"/>
<dbReference type="PDBsum" id="8FKQ"/>
<dbReference type="PDBsum" id="8FKR"/>
<dbReference type="PDBsum" id="8FKS"/>
<dbReference type="PDBsum" id="8FKT"/>
<dbReference type="PDBsum" id="8FKU"/>
<dbReference type="PDBsum" id="8FKV"/>
<dbReference type="PDBsum" id="8FKW"/>
<dbReference type="PDBsum" id="8FKX"/>
<dbReference type="PDBsum" id="8FKY"/>
<dbReference type="PDBsum" id="8FKZ"/>
<dbReference type="PDBsum" id="8FL0"/>
<dbReference type="PDBsum" id="8FL2"/>
<dbReference type="PDBsum" id="8FL3"/>
<dbReference type="PDBsum" id="8FL4"/>
<dbReference type="PDBsum" id="8FL6"/>
<dbReference type="PDBsum" id="8FL7"/>
<dbReference type="PDBsum" id="8FL9"/>
<dbReference type="PDBsum" id="8FLA"/>
<dbReference type="PDBsum" id="8FLB"/>
<dbReference type="PDBsum" id="8FLC"/>
<dbReference type="PDBsum" id="8FLD"/>
<dbReference type="PDBsum" id="8FLE"/>
<dbReference type="PDBsum" id="8FLF"/>
<dbReference type="PDBsum" id="8G5Y"/>
<dbReference type="PDBsum" id="8G5Z"/>
<dbReference type="PDBsum" id="8G60"/>
<dbReference type="PDBsum" id="8G61"/>
<dbReference type="PDBsum" id="8G6J"/>
<dbReference type="PDBsum" id="8GLP"/>
<dbReference type="PDBsum" id="8IDT"/>
<dbReference type="PDBsum" id="8IDY"/>
<dbReference type="PDBsum" id="8IE3"/>
<dbReference type="PDBsum" id="8IFD"/>
<dbReference type="PDBsum" id="8IFE"/>
<dbReference type="PDBsum" id="8INE"/>
<dbReference type="PDBsum" id="8INF"/>
<dbReference type="PDBsum" id="8INK"/>
<dbReference type="PDBsum" id="8IPD"/>
<dbReference type="PDBsum" id="8IPX"/>
<dbReference type="PDBsum" id="8IPY"/>
<dbReference type="PDBsum" id="8IR1"/>
<dbReference type="PDBsum" id="8IR3"/>
<dbReference type="PDBsum" id="8JDJ"/>
<dbReference type="PDBsum" id="8JDK"/>
<dbReference type="PDBsum" id="8JDL"/>
<dbReference type="PDBsum" id="8JDM"/>
<dbReference type="PDBsum" id="8K2C"/>
<dbReference type="PDBsum" id="8OHD"/>
<dbReference type="PDBsum" id="8OJ0"/>
<dbReference type="PDBsum" id="8OJ5"/>
<dbReference type="PDBsum" id="8OJ8"/>
<dbReference type="PDBsum" id="8QFD"/>
<dbReference type="PDBsum" id="8QOI"/>
<dbReference type="PDBsum" id="8QYX"/>
<dbReference type="PDBsum" id="8RL2"/>
<dbReference type="PDBsum" id="8UKB"/>
<dbReference type="PDBsum" id="8XSX"/>
<dbReference type="PDBsum" id="8XSY"/>
<dbReference type="PDBsum" id="8XSZ"/>
<dbReference type="PDBsum" id="8Y0W"/>
<dbReference type="PDBsum" id="8Y0X"/>
<dbReference type="PDBsum" id="8YOO"/>
<dbReference type="PDBsum" id="8YOP"/>
<dbReference type="PDBsum" id="9C3H"/>
<dbReference type="PDBsum" id="9FPZ"/>
<dbReference type="PDBsum" id="9FQ0"/>
<dbReference type="PDBsum" id="9G8M"/>
<dbReference type="PDBsum" id="9GMO"/>
<dbReference type="EMDB" id="EMD-0948"/>
<dbReference type="EMDB" id="EMD-0963"/>
<dbReference type="EMDB" id="EMD-0964"/>
<dbReference type="EMDB" id="EMD-0978"/>
<dbReference type="EMDB" id="EMD-10668"/>
<dbReference type="EMDB" id="EMD-10674"/>
<dbReference type="EMDB" id="EMD-10690"/>
<dbReference type="EMDB" id="EMD-10709"/>
<dbReference type="EMDB" id="EMD-11098"/>
<dbReference type="EMDB" id="EMD-11099"/>
<dbReference type="EMDB" id="EMD-11100"/>
<dbReference type="EMDB" id="EMD-11288"/>
<dbReference type="EMDB" id="EMD-11289"/>
<dbReference type="EMDB" id="EMD-11292"/>
<dbReference type="EMDB" id="EMD-11299"/>
<dbReference type="EMDB" id="EMD-12189"/>
<dbReference type="EMDB" id="EMD-13094"/>
<dbReference type="EMDB" id="EMD-14181"/>
<dbReference type="EMDB" id="EMD-15113"/>
<dbReference type="EMDB" id="EMD-16880"/>
<dbReference type="EMDB" id="EMD-16902"/>
<dbReference type="EMDB" id="EMD-16905"/>
<dbReference type="EMDB" id="EMD-16908"/>
<dbReference type="EMDB" id="EMD-18382"/>
<dbReference type="EMDB" id="EMD-18539"/>
<dbReference type="EMDB" id="EMD-18765"/>
<dbReference type="EMDB" id="EMD-19330"/>
<dbReference type="EMDB" id="EMD-29252"/>
<dbReference type="EMDB" id="EMD-29253"/>
<dbReference type="EMDB" id="EMD-29254"/>
<dbReference type="EMDB" id="EMD-29255"/>
<dbReference type="EMDB" id="EMD-29256"/>
<dbReference type="EMDB" id="EMD-29257"/>
<dbReference type="EMDB" id="EMD-29258"/>
<dbReference type="EMDB" id="EMD-29259"/>
<dbReference type="EMDB" id="EMD-29260"/>
<dbReference type="EMDB" id="EMD-29261"/>
<dbReference type="EMDB" id="EMD-29262"/>
<dbReference type="EMDB" id="EMD-29263"/>
<dbReference type="EMDB" id="EMD-29265"/>
<dbReference type="EMDB" id="EMD-29266"/>
<dbReference type="EMDB" id="EMD-29267"/>
<dbReference type="EMDB" id="EMD-29268"/>
<dbReference type="EMDB" id="EMD-29269"/>
<dbReference type="EMDB" id="EMD-29271"/>
<dbReference type="EMDB" id="EMD-29272"/>
<dbReference type="EMDB" id="EMD-29273"/>
<dbReference type="EMDB" id="EMD-29274"/>
<dbReference type="EMDB" id="EMD-29275"/>
<dbReference type="EMDB" id="EMD-29276"/>
<dbReference type="EMDB" id="EMD-29277"/>
<dbReference type="EMDB" id="EMD-29757"/>
<dbReference type="EMDB" id="EMD-29758"/>
<dbReference type="EMDB" id="EMD-29759"/>
<dbReference type="EMDB" id="EMD-29760"/>
<dbReference type="EMDB" id="EMD-29771"/>
<dbReference type="EMDB" id="EMD-31465"/>
<dbReference type="EMDB" id="EMD-33329"/>
<dbReference type="EMDB" id="EMD-33330"/>
<dbReference type="EMDB" id="EMD-35370"/>
<dbReference type="EMDB" id="EMD-35371"/>
<dbReference type="EMDB" id="EMD-35375"/>
<dbReference type="EMDB" id="EMD-35413"/>
<dbReference type="EMDB" id="EMD-35414"/>
<dbReference type="EMDB" id="EMD-35596"/>
<dbReference type="EMDB" id="EMD-35597"/>
<dbReference type="EMDB" id="EMD-35599"/>
<dbReference type="EMDB" id="EMD-35639"/>
<dbReference type="EMDB" id="EMD-35649"/>
<dbReference type="EMDB" id="EMD-35651"/>
<dbReference type="EMDB" id="EMD-35672"/>
<dbReference type="EMDB" id="EMD-35673"/>
<dbReference type="EMDB" id="EMD-36178"/>
<dbReference type="EMDB" id="EMD-36179"/>
<dbReference type="EMDB" id="EMD-36180"/>
<dbReference type="EMDB" id="EMD-36181"/>
<dbReference type="EMDB" id="EMD-36838"/>
<dbReference type="EMDB" id="EMD-38629"/>
<dbReference type="EMDB" id="EMD-38630"/>
<dbReference type="EMDB" id="EMD-38631"/>
<dbReference type="EMDB" id="EMD-3883"/>
<dbReference type="EMDB" id="EMD-39455"/>
<dbReference type="EMDB" id="EMD-39456"/>
<dbReference type="EMDB" id="EMD-40205"/>
<dbReference type="EMDB" id="EMD-4070"/>
<dbReference type="EMDB" id="EMD-42351"/>
<dbReference type="EMDB" id="EMD-45170"/>
<dbReference type="EMDB" id="EMD-50641"/>
<dbReference type="EMDB" id="EMD-50642"/>
<dbReference type="EMDB" id="EMD-51132"/>
<dbReference type="EMDB" id="EMD-51452"/>
<dbReference type="EMDB" id="EMD-9701"/>
<dbReference type="EMDB" id="EMD-9702"/>
<dbReference type="EMDB" id="EMD-9703"/>
<dbReference type="SMR" id="P36578"/>
<dbReference type="BioGRID" id="112044">
    <property type="interactions" value="798"/>
</dbReference>
<dbReference type="ComplexPortal" id="CPX-5183">
    <property type="entry name" value="60S cytosolic large ribosomal subunit"/>
</dbReference>
<dbReference type="ComplexPortal" id="CPX-7664">
    <property type="entry name" value="60S cytosolic large ribosomal subunit, testis-specific variant"/>
</dbReference>
<dbReference type="ComplexPortal" id="CPX-7665">
    <property type="entry name" value="60S cytosolic large ribosomal subunit, striated muscle variant"/>
</dbReference>
<dbReference type="CORUM" id="P36578"/>
<dbReference type="DIP" id="DIP-27559N"/>
<dbReference type="FunCoup" id="P36578">
    <property type="interactions" value="2195"/>
</dbReference>
<dbReference type="IntAct" id="P36578">
    <property type="interactions" value="487"/>
</dbReference>
<dbReference type="MINT" id="P36578"/>
<dbReference type="STRING" id="9606.ENSP00000311430"/>
<dbReference type="DrugBank" id="DB11638">
    <property type="generic name" value="Artenimol"/>
</dbReference>
<dbReference type="GlyGen" id="P36578">
    <property type="glycosylation" value="4 sites, 2 N-linked glycans (2 sites), 1 O-linked glycan (2 sites)"/>
</dbReference>
<dbReference type="iPTMnet" id="P36578"/>
<dbReference type="MetOSite" id="P36578"/>
<dbReference type="PhosphoSitePlus" id="P36578"/>
<dbReference type="SwissPalm" id="P36578"/>
<dbReference type="BioMuta" id="RPL4"/>
<dbReference type="DMDM" id="22002063"/>
<dbReference type="jPOST" id="P36578"/>
<dbReference type="MassIVE" id="P36578"/>
<dbReference type="PaxDb" id="9606-ENSP00000311430"/>
<dbReference type="PeptideAtlas" id="P36578"/>
<dbReference type="ProteomicsDB" id="55216"/>
<dbReference type="Pumba" id="P36578"/>
<dbReference type="TopDownProteomics" id="P36578"/>
<dbReference type="Antibodypedia" id="26140">
    <property type="antibodies" value="172 antibodies from 29 providers"/>
</dbReference>
<dbReference type="DNASU" id="6124"/>
<dbReference type="Ensembl" id="ENST00000307961.11">
    <property type="protein sequence ID" value="ENSP00000311430.6"/>
    <property type="gene ID" value="ENSG00000174444.15"/>
</dbReference>
<dbReference type="GeneID" id="6124"/>
<dbReference type="KEGG" id="hsa:6124"/>
<dbReference type="MANE-Select" id="ENST00000307961.11">
    <property type="protein sequence ID" value="ENSP00000311430.6"/>
    <property type="RefSeq nucleotide sequence ID" value="NM_000968.4"/>
    <property type="RefSeq protein sequence ID" value="NP_000959.2"/>
</dbReference>
<dbReference type="UCSC" id="uc002apv.4">
    <property type="organism name" value="human"/>
</dbReference>
<dbReference type="AGR" id="HGNC:10353"/>
<dbReference type="CTD" id="6124"/>
<dbReference type="DisGeNET" id="6124"/>
<dbReference type="GeneCards" id="RPL4"/>
<dbReference type="HGNC" id="HGNC:10353">
    <property type="gene designation" value="RPL4"/>
</dbReference>
<dbReference type="HPA" id="ENSG00000174444">
    <property type="expression patterns" value="Low tissue specificity"/>
</dbReference>
<dbReference type="MIM" id="180479">
    <property type="type" value="gene"/>
</dbReference>
<dbReference type="neXtProt" id="NX_P36578"/>
<dbReference type="OpenTargets" id="ENSG00000174444"/>
<dbReference type="PharmGKB" id="PA34749"/>
<dbReference type="VEuPathDB" id="HostDB:ENSG00000174444"/>
<dbReference type="eggNOG" id="KOG1475">
    <property type="taxonomic scope" value="Eukaryota"/>
</dbReference>
<dbReference type="GeneTree" id="ENSGT00390000018145"/>
<dbReference type="HOGENOM" id="CLU_026535_4_0_1"/>
<dbReference type="InParanoid" id="P36578"/>
<dbReference type="OMA" id="ALYGTWR"/>
<dbReference type="OrthoDB" id="9535260at2759"/>
<dbReference type="PAN-GO" id="P36578">
    <property type="GO annotations" value="3 GO annotations based on evolutionary models"/>
</dbReference>
<dbReference type="PhylomeDB" id="P36578"/>
<dbReference type="TreeFam" id="TF300593"/>
<dbReference type="PathwayCommons" id="P36578"/>
<dbReference type="Reactome" id="R-HSA-156827">
    <property type="pathway name" value="L13a-mediated translational silencing of Ceruloplasmin expression"/>
</dbReference>
<dbReference type="Reactome" id="R-HSA-156902">
    <property type="pathway name" value="Peptide chain elongation"/>
</dbReference>
<dbReference type="Reactome" id="R-HSA-1799339">
    <property type="pathway name" value="SRP-dependent cotranslational protein targeting to membrane"/>
</dbReference>
<dbReference type="Reactome" id="R-HSA-192823">
    <property type="pathway name" value="Viral mRNA Translation"/>
</dbReference>
<dbReference type="Reactome" id="R-HSA-2408557">
    <property type="pathway name" value="Selenocysteine synthesis"/>
</dbReference>
<dbReference type="Reactome" id="R-HSA-6791226">
    <property type="pathway name" value="Major pathway of rRNA processing in the nucleolus and cytosol"/>
</dbReference>
<dbReference type="Reactome" id="R-HSA-72689">
    <property type="pathway name" value="Formation of a pool of free 40S subunits"/>
</dbReference>
<dbReference type="Reactome" id="R-HSA-72706">
    <property type="pathway name" value="GTP hydrolysis and joining of the 60S ribosomal subunit"/>
</dbReference>
<dbReference type="Reactome" id="R-HSA-72764">
    <property type="pathway name" value="Eukaryotic Translation Termination"/>
</dbReference>
<dbReference type="Reactome" id="R-HSA-9010553">
    <property type="pathway name" value="Regulation of expression of SLITs and ROBOs"/>
</dbReference>
<dbReference type="Reactome" id="R-HSA-9633012">
    <property type="pathway name" value="Response of EIF2AK4 (GCN2) to amino acid deficiency"/>
</dbReference>
<dbReference type="Reactome" id="R-HSA-975956">
    <property type="pathway name" value="Nonsense Mediated Decay (NMD) independent of the Exon Junction Complex (EJC)"/>
</dbReference>
<dbReference type="Reactome" id="R-HSA-975957">
    <property type="pathway name" value="Nonsense Mediated Decay (NMD) enhanced by the Exon Junction Complex (EJC)"/>
</dbReference>
<dbReference type="SignaLink" id="P36578"/>
<dbReference type="SIGNOR" id="P36578"/>
<dbReference type="BioGRID-ORCS" id="6124">
    <property type="hits" value="824 hits in 1165 CRISPR screens"/>
</dbReference>
<dbReference type="CD-CODE" id="232F8A39">
    <property type="entry name" value="P-body"/>
</dbReference>
<dbReference type="CD-CODE" id="91857CE7">
    <property type="entry name" value="Nucleolus"/>
</dbReference>
<dbReference type="CD-CODE" id="FB4E32DD">
    <property type="entry name" value="Presynaptic clusters and postsynaptic densities"/>
</dbReference>
<dbReference type="ChiTaRS" id="RPL4">
    <property type="organism name" value="human"/>
</dbReference>
<dbReference type="EvolutionaryTrace" id="P36578"/>
<dbReference type="GeneWiki" id="Ribosomal_protein_L4"/>
<dbReference type="GenomeRNAi" id="6124"/>
<dbReference type="Pharos" id="P36578">
    <property type="development level" value="Tbio"/>
</dbReference>
<dbReference type="PRO" id="PR:P36578"/>
<dbReference type="Proteomes" id="UP000005640">
    <property type="component" value="Chromosome 15"/>
</dbReference>
<dbReference type="RNAct" id="P36578">
    <property type="molecule type" value="protein"/>
</dbReference>
<dbReference type="Bgee" id="ENSG00000174444">
    <property type="expression patterns" value="Expressed in cortical plate and 220 other cell types or tissues"/>
</dbReference>
<dbReference type="ExpressionAtlas" id="P36578">
    <property type="expression patterns" value="baseline and differential"/>
</dbReference>
<dbReference type="GO" id="GO:0005737">
    <property type="term" value="C:cytoplasm"/>
    <property type="evidence" value="ECO:0007005"/>
    <property type="project" value="UniProtKB"/>
</dbReference>
<dbReference type="GO" id="GO:0005829">
    <property type="term" value="C:cytosol"/>
    <property type="evidence" value="ECO:0000314"/>
    <property type="project" value="HPA"/>
</dbReference>
<dbReference type="GO" id="GO:0022625">
    <property type="term" value="C:cytosolic large ribosomal subunit"/>
    <property type="evidence" value="ECO:0000314"/>
    <property type="project" value="UniProtKB"/>
</dbReference>
<dbReference type="GO" id="GO:0022626">
    <property type="term" value="C:cytosolic ribosome"/>
    <property type="evidence" value="ECO:0000314"/>
    <property type="project" value="FlyBase"/>
</dbReference>
<dbReference type="GO" id="GO:0005783">
    <property type="term" value="C:endoplasmic reticulum"/>
    <property type="evidence" value="ECO:0000314"/>
    <property type="project" value="HPA"/>
</dbReference>
<dbReference type="GO" id="GO:0070062">
    <property type="term" value="C:extracellular exosome"/>
    <property type="evidence" value="ECO:0007005"/>
    <property type="project" value="UniProtKB"/>
</dbReference>
<dbReference type="GO" id="GO:0005925">
    <property type="term" value="C:focal adhesion"/>
    <property type="evidence" value="ECO:0007005"/>
    <property type="project" value="UniProtKB"/>
</dbReference>
<dbReference type="GO" id="GO:0016020">
    <property type="term" value="C:membrane"/>
    <property type="evidence" value="ECO:0007005"/>
    <property type="project" value="UniProtKB"/>
</dbReference>
<dbReference type="GO" id="GO:0016604">
    <property type="term" value="C:nuclear body"/>
    <property type="evidence" value="ECO:0000314"/>
    <property type="project" value="HPA"/>
</dbReference>
<dbReference type="GO" id="GO:0005730">
    <property type="term" value="C:nucleolus"/>
    <property type="evidence" value="ECO:0000314"/>
    <property type="project" value="HPA"/>
</dbReference>
<dbReference type="GO" id="GO:0005634">
    <property type="term" value="C:nucleus"/>
    <property type="evidence" value="ECO:0000314"/>
    <property type="project" value="UniProtKB"/>
</dbReference>
<dbReference type="GO" id="GO:1990904">
    <property type="term" value="C:ribonucleoprotein complex"/>
    <property type="evidence" value="ECO:0000314"/>
    <property type="project" value="MGI"/>
</dbReference>
<dbReference type="GO" id="GO:0005791">
    <property type="term" value="C:rough endoplasmic reticulum"/>
    <property type="evidence" value="ECO:0000314"/>
    <property type="project" value="UniProtKB"/>
</dbReference>
<dbReference type="GO" id="GO:0003723">
    <property type="term" value="F:RNA binding"/>
    <property type="evidence" value="ECO:0007005"/>
    <property type="project" value="UniProtKB"/>
</dbReference>
<dbReference type="GO" id="GO:0003735">
    <property type="term" value="F:structural constituent of ribosome"/>
    <property type="evidence" value="ECO:0000314"/>
    <property type="project" value="UniProtKB"/>
</dbReference>
<dbReference type="GO" id="GO:0002181">
    <property type="term" value="P:cytoplasmic translation"/>
    <property type="evidence" value="ECO:0000303"/>
    <property type="project" value="ComplexPortal"/>
</dbReference>
<dbReference type="GO" id="GO:0006412">
    <property type="term" value="P:translation"/>
    <property type="evidence" value="ECO:0000304"/>
    <property type="project" value="ProtInc"/>
</dbReference>
<dbReference type="DisProt" id="DP01654"/>
<dbReference type="FunFam" id="3.40.1370.10:FF:000002">
    <property type="entry name" value="60S ribosomal protein L4"/>
    <property type="match status" value="1"/>
</dbReference>
<dbReference type="Gene3D" id="3.40.1370.10">
    <property type="match status" value="1"/>
</dbReference>
<dbReference type="InterPro" id="IPR025755">
    <property type="entry name" value="Ribos_uL4_C_dom"/>
</dbReference>
<dbReference type="InterPro" id="IPR002136">
    <property type="entry name" value="Ribosomal_uL4"/>
</dbReference>
<dbReference type="InterPro" id="IPR023574">
    <property type="entry name" value="Ribosomal_uL4_dom_sf"/>
</dbReference>
<dbReference type="InterPro" id="IPR013000">
    <property type="entry name" value="Ribosomal_uL4_euk/arc_CS"/>
</dbReference>
<dbReference type="InterPro" id="IPR045240">
    <property type="entry name" value="Ribosomal_uL4_euk/arch"/>
</dbReference>
<dbReference type="PANTHER" id="PTHR19431">
    <property type="entry name" value="60S RIBOSOMAL PROTEIN L4"/>
    <property type="match status" value="1"/>
</dbReference>
<dbReference type="Pfam" id="PF14374">
    <property type="entry name" value="Ribos_L4_asso_C"/>
    <property type="match status" value="1"/>
</dbReference>
<dbReference type="Pfam" id="PF00573">
    <property type="entry name" value="Ribosomal_L4"/>
    <property type="match status" value="1"/>
</dbReference>
<dbReference type="SUPFAM" id="SSF52166">
    <property type="entry name" value="Ribosomal protein L4"/>
    <property type="match status" value="1"/>
</dbReference>
<dbReference type="PROSITE" id="PS00939">
    <property type="entry name" value="RIBOSOMAL_L1E"/>
    <property type="match status" value="1"/>
</dbReference>